<proteinExistence type="evidence at transcript level"/>
<sequence length="221" mass="24589">MAGGGQVVLRTLSQQGWVRGSGAAVLSRLQDAAVVRPGFLSTAEEETLSRELEPELRRRRYEYDHWDAAIHGFRETEKSRWSEASRAILRRVQAAAFGPGQTLLSSVHVLDLEPQGYIKPHVDSIKFCGSTIAGLSLLSPSVMRLVHTQEPGEWLELLLEPGSLYILRGSARYDFSHEILRDEESFFGERRIPRGRRISVICRSLPEGMGPGEPGQLPPAC</sequence>
<accession>Q2M2S8</accession>
<keyword id="KW-0223">Dioxygenase</keyword>
<keyword id="KW-0408">Iron</keyword>
<keyword id="KW-0479">Metal-binding</keyword>
<keyword id="KW-0496">Mitochondrion</keyword>
<keyword id="KW-1210">Necrosis</keyword>
<keyword id="KW-0560">Oxidoreductase</keyword>
<keyword id="KW-1185">Reference proteome</keyword>
<keyword id="KW-0809">Transit peptide</keyword>
<organism>
    <name type="scientific">Bos taurus</name>
    <name type="common">Bovine</name>
    <dbReference type="NCBI Taxonomy" id="9913"/>
    <lineage>
        <taxon>Eukaryota</taxon>
        <taxon>Metazoa</taxon>
        <taxon>Chordata</taxon>
        <taxon>Craniata</taxon>
        <taxon>Vertebrata</taxon>
        <taxon>Euteleostomi</taxon>
        <taxon>Mammalia</taxon>
        <taxon>Eutheria</taxon>
        <taxon>Laurasiatheria</taxon>
        <taxon>Artiodactyla</taxon>
        <taxon>Ruminantia</taxon>
        <taxon>Pecora</taxon>
        <taxon>Bovidae</taxon>
        <taxon>Bovinae</taxon>
        <taxon>Bos</taxon>
    </lineage>
</organism>
<evidence type="ECO:0000250" key="1">
    <source>
        <dbReference type="UniProtKB" id="Q9BT30"/>
    </source>
</evidence>
<evidence type="ECO:0000250" key="2">
    <source>
        <dbReference type="UniProtKB" id="Q9D6Z0"/>
    </source>
</evidence>
<evidence type="ECO:0000255" key="3"/>
<evidence type="ECO:0000305" key="4"/>
<comment type="function">
    <text evidence="1 2">May function as protein hydroxylase; can catalyze auto-hydroxylation at Leu-110 (in vitro), but this activity may be due to the absence of the true substrate. Required to induce programmed necrosis in response to DNA damage caused by cytotoxic alkylating agents. Acts by triggering the collapse of mitochondrial membrane potential and loss of mitochondrial function that leads to energy depletion and cell death. ALKBH7-mediated necrosis is probably required to prevent the accumulation of cells with DNA damage. Does not display DNA demethylase activity (By similarity). Involved in fatty acid metabolism (By similarity).</text>
</comment>
<comment type="cofactor">
    <cofactor evidence="1">
        <name>Fe(2+)</name>
        <dbReference type="ChEBI" id="CHEBI:29033"/>
    </cofactor>
    <text evidence="1">Binds 1 Fe(2+) ion per subunit.</text>
</comment>
<comment type="subcellular location">
    <subcellularLocation>
        <location evidence="1">Mitochondrion matrix</location>
    </subcellularLocation>
</comment>
<comment type="similarity">
    <text evidence="4">Belongs to the alkB family.</text>
</comment>
<name>ALKB7_BOVIN</name>
<dbReference type="EC" id="1.14.11.-"/>
<dbReference type="EMBL" id="BC111665">
    <property type="protein sequence ID" value="AAI11666.1"/>
    <property type="molecule type" value="mRNA"/>
</dbReference>
<dbReference type="RefSeq" id="NP_001039867.1">
    <property type="nucleotide sequence ID" value="NM_001046402.2"/>
</dbReference>
<dbReference type="SMR" id="Q2M2S8"/>
<dbReference type="FunCoup" id="Q2M2S8">
    <property type="interactions" value="585"/>
</dbReference>
<dbReference type="STRING" id="9913.ENSBTAP00000035795"/>
<dbReference type="PaxDb" id="9913-ENSBTAP00000035795"/>
<dbReference type="GeneID" id="535305"/>
<dbReference type="KEGG" id="bta:535305"/>
<dbReference type="CTD" id="84266"/>
<dbReference type="VEuPathDB" id="HostDB:ENSBTAG00000025540"/>
<dbReference type="eggNOG" id="KOG4176">
    <property type="taxonomic scope" value="Eukaryota"/>
</dbReference>
<dbReference type="HOGENOM" id="CLU_092162_1_0_1"/>
<dbReference type="InParanoid" id="Q2M2S8"/>
<dbReference type="OMA" id="VEPHMKR"/>
<dbReference type="OrthoDB" id="28127at2759"/>
<dbReference type="TreeFam" id="TF314197"/>
<dbReference type="Proteomes" id="UP000009136">
    <property type="component" value="Chromosome 7"/>
</dbReference>
<dbReference type="Bgee" id="ENSBTAG00000025540">
    <property type="expression patterns" value="Expressed in tongue muscle and 105 other cell types or tissues"/>
</dbReference>
<dbReference type="GO" id="GO:0005759">
    <property type="term" value="C:mitochondrial matrix"/>
    <property type="evidence" value="ECO:0000250"/>
    <property type="project" value="UniProtKB"/>
</dbReference>
<dbReference type="GO" id="GO:0051213">
    <property type="term" value="F:dioxygenase activity"/>
    <property type="evidence" value="ECO:0007669"/>
    <property type="project" value="UniProtKB-KW"/>
</dbReference>
<dbReference type="GO" id="GO:0046872">
    <property type="term" value="F:metal ion binding"/>
    <property type="evidence" value="ECO:0007669"/>
    <property type="project" value="UniProtKB-KW"/>
</dbReference>
<dbReference type="GO" id="GO:0006974">
    <property type="term" value="P:DNA damage response"/>
    <property type="evidence" value="ECO:0000250"/>
    <property type="project" value="UniProtKB"/>
</dbReference>
<dbReference type="GO" id="GO:0006631">
    <property type="term" value="P:fatty acid metabolic process"/>
    <property type="evidence" value="ECO:0000250"/>
    <property type="project" value="UniProtKB"/>
</dbReference>
<dbReference type="GO" id="GO:0010883">
    <property type="term" value="P:regulation of lipid storage"/>
    <property type="evidence" value="ECO:0000250"/>
    <property type="project" value="UniProtKB"/>
</dbReference>
<dbReference type="GO" id="GO:1902445">
    <property type="term" value="P:regulation of mitochondrial membrane permeability involved in programmed necrotic cell death"/>
    <property type="evidence" value="ECO:0000250"/>
    <property type="project" value="UniProtKB"/>
</dbReference>
<dbReference type="FunFam" id="2.60.120.590:FF:000009">
    <property type="entry name" value="Alpha-ketoglutarate-dependent dioxygenase alkB homolog 7, mitochondrial"/>
    <property type="match status" value="1"/>
</dbReference>
<dbReference type="Gene3D" id="2.60.120.590">
    <property type="entry name" value="Alpha-ketoglutarate-dependent dioxygenase AlkB-like"/>
    <property type="match status" value="1"/>
</dbReference>
<dbReference type="InterPro" id="IPR027450">
    <property type="entry name" value="AlkB-like"/>
</dbReference>
<dbReference type="InterPro" id="IPR037151">
    <property type="entry name" value="AlkB-like_sf"/>
</dbReference>
<dbReference type="InterPro" id="IPR032870">
    <property type="entry name" value="ALKBH7-like"/>
</dbReference>
<dbReference type="PANTHER" id="PTHR21052:SF0">
    <property type="entry name" value="ALPHA-KETOGLUTARATE-DEPENDENT DIOXYGENASE ALKB HOMOLOG 7, MITOCHONDRIAL"/>
    <property type="match status" value="1"/>
</dbReference>
<dbReference type="PANTHER" id="PTHR21052">
    <property type="entry name" value="SPERMATOGENESIS ASSOCIATED 11-RELATED"/>
    <property type="match status" value="1"/>
</dbReference>
<dbReference type="Pfam" id="PF13532">
    <property type="entry name" value="2OG-FeII_Oxy_2"/>
    <property type="match status" value="1"/>
</dbReference>
<dbReference type="SUPFAM" id="SSF51197">
    <property type="entry name" value="Clavaminate synthase-like"/>
    <property type="match status" value="1"/>
</dbReference>
<reference key="1">
    <citation type="submission" date="2006-01" db="EMBL/GenBank/DDBJ databases">
        <authorList>
            <consortium name="NIH - Mammalian Gene Collection (MGC) project"/>
        </authorList>
    </citation>
    <scope>NUCLEOTIDE SEQUENCE [LARGE SCALE MRNA]</scope>
    <source>
        <strain>Hereford</strain>
        <tissue>Testis</tissue>
    </source>
</reference>
<feature type="transit peptide" description="Mitochondrion" evidence="3">
    <location>
        <begin position="1"/>
        <end position="23"/>
    </location>
</feature>
<feature type="chain" id="PRO_0000239287" description="Alpha-ketoglutarate-dependent dioxygenase alkB homolog 7, mitochondrial">
    <location>
        <begin position="24"/>
        <end position="221"/>
    </location>
</feature>
<feature type="binding site" evidence="1">
    <location>
        <position position="121"/>
    </location>
    <ligand>
        <name>Fe cation</name>
        <dbReference type="ChEBI" id="CHEBI:24875"/>
        <note>catalytic</note>
    </ligand>
</feature>
<feature type="binding site" evidence="1">
    <location>
        <position position="123"/>
    </location>
    <ligand>
        <name>Fe cation</name>
        <dbReference type="ChEBI" id="CHEBI:24875"/>
        <note>catalytic</note>
    </ligand>
</feature>
<feature type="binding site" evidence="1">
    <location>
        <position position="165"/>
    </location>
    <ligand>
        <name>2-oxoglutarate</name>
        <dbReference type="ChEBI" id="CHEBI:16810"/>
    </ligand>
</feature>
<feature type="binding site" evidence="1">
    <location>
        <position position="177"/>
    </location>
    <ligand>
        <name>Fe cation</name>
        <dbReference type="ChEBI" id="CHEBI:24875"/>
        <note>catalytic</note>
    </ligand>
</feature>
<feature type="binding site" evidence="1">
    <location>
        <begin position="197"/>
        <end position="199"/>
    </location>
    <ligand>
        <name>2-oxoglutarate</name>
        <dbReference type="ChEBI" id="CHEBI:16810"/>
    </ligand>
</feature>
<feature type="binding site" evidence="1">
    <location>
        <position position="203"/>
    </location>
    <ligand>
        <name>2-oxoglutarate</name>
        <dbReference type="ChEBI" id="CHEBI:16810"/>
    </ligand>
</feature>
<protein>
    <recommendedName>
        <fullName>Alpha-ketoglutarate-dependent dioxygenase alkB homolog 7, mitochondrial</fullName>
        <ecNumber>1.14.11.-</ecNumber>
    </recommendedName>
    <alternativeName>
        <fullName>Alkylated DNA repair protein alkB homolog 7</fullName>
    </alternativeName>
</protein>
<gene>
    <name type="primary">ALKBH7</name>
</gene>